<protein>
    <recommendedName>
        <fullName evidence="1">Crossover junction endodeoxyribonuclease RuvC</fullName>
        <ecNumber evidence="1">3.1.21.10</ecNumber>
    </recommendedName>
    <alternativeName>
        <fullName evidence="1">Holliday junction nuclease RuvC</fullName>
    </alternativeName>
    <alternativeName>
        <fullName evidence="1">Holliday junction resolvase RuvC</fullName>
    </alternativeName>
</protein>
<feature type="chain" id="PRO_1000002719" description="Crossover junction endodeoxyribonuclease RuvC">
    <location>
        <begin position="1"/>
        <end position="167"/>
    </location>
</feature>
<feature type="active site" evidence="1">
    <location>
        <position position="11"/>
    </location>
</feature>
<feature type="active site" evidence="1">
    <location>
        <position position="71"/>
    </location>
</feature>
<feature type="active site" evidence="1">
    <location>
        <position position="143"/>
    </location>
</feature>
<feature type="binding site" evidence="1">
    <location>
        <position position="11"/>
    </location>
    <ligand>
        <name>Mg(2+)</name>
        <dbReference type="ChEBI" id="CHEBI:18420"/>
        <label>1</label>
    </ligand>
</feature>
<feature type="binding site" evidence="1">
    <location>
        <position position="71"/>
    </location>
    <ligand>
        <name>Mg(2+)</name>
        <dbReference type="ChEBI" id="CHEBI:18420"/>
        <label>2</label>
    </ligand>
</feature>
<feature type="binding site" evidence="1">
    <location>
        <position position="143"/>
    </location>
    <ligand>
        <name>Mg(2+)</name>
        <dbReference type="ChEBI" id="CHEBI:18420"/>
        <label>1</label>
    </ligand>
</feature>
<comment type="function">
    <text evidence="1">The RuvA-RuvB-RuvC complex processes Holliday junction (HJ) DNA during genetic recombination and DNA repair. Endonuclease that resolves HJ intermediates. Cleaves cruciform DNA by making single-stranded nicks across the HJ at symmetrical positions within the homologous arms, yielding a 5'-phosphate and a 3'-hydroxyl group; requires a central core of homology in the junction. The consensus cleavage sequence is 5'-(A/T)TT(C/G)-3'. Cleavage occurs on the 3'-side of the TT dinucleotide at the point of strand exchange. HJ branch migration catalyzed by RuvA-RuvB allows RuvC to scan DNA until it finds its consensus sequence, where it cleaves and resolves the cruciform DNA.</text>
</comment>
<comment type="catalytic activity">
    <reaction evidence="1">
        <text>Endonucleolytic cleavage at a junction such as a reciprocal single-stranded crossover between two homologous DNA duplexes (Holliday junction).</text>
        <dbReference type="EC" id="3.1.21.10"/>
    </reaction>
</comment>
<comment type="cofactor">
    <cofactor evidence="1">
        <name>Mg(2+)</name>
        <dbReference type="ChEBI" id="CHEBI:18420"/>
    </cofactor>
    <text evidence="1">Binds 2 Mg(2+) ion per subunit.</text>
</comment>
<comment type="subunit">
    <text evidence="1">Homodimer which binds Holliday junction (HJ) DNA. The HJ becomes 2-fold symmetrical on binding to RuvC with unstacked arms; it has a different conformation from HJ DNA in complex with RuvA. In the full resolvosome a probable DNA-RuvA(4)-RuvB(12)-RuvC(2) complex forms which resolves the HJ.</text>
</comment>
<comment type="subcellular location">
    <subcellularLocation>
        <location evidence="1">Cytoplasm</location>
    </subcellularLocation>
</comment>
<comment type="similarity">
    <text evidence="1">Belongs to the RuvC family.</text>
</comment>
<accession>A1UR86</accession>
<keyword id="KW-0963">Cytoplasm</keyword>
<keyword id="KW-0227">DNA damage</keyword>
<keyword id="KW-0233">DNA recombination</keyword>
<keyword id="KW-0234">DNA repair</keyword>
<keyword id="KW-0238">DNA-binding</keyword>
<keyword id="KW-0255">Endonuclease</keyword>
<keyword id="KW-0378">Hydrolase</keyword>
<keyword id="KW-0460">Magnesium</keyword>
<keyword id="KW-0479">Metal-binding</keyword>
<keyword id="KW-0540">Nuclease</keyword>
<gene>
    <name evidence="1" type="primary">ruvC</name>
    <name type="ordered locus">BARBAKC583_0151</name>
</gene>
<dbReference type="EC" id="3.1.21.10" evidence="1"/>
<dbReference type="EMBL" id="CP000524">
    <property type="protein sequence ID" value="ABM45441.1"/>
    <property type="molecule type" value="Genomic_DNA"/>
</dbReference>
<dbReference type="RefSeq" id="WP_005765938.1">
    <property type="nucleotide sequence ID" value="NC_008783.1"/>
</dbReference>
<dbReference type="SMR" id="A1UR86"/>
<dbReference type="STRING" id="360095.BARBAKC583_0151"/>
<dbReference type="GeneID" id="4684450"/>
<dbReference type="KEGG" id="bbk:BARBAKC583_0151"/>
<dbReference type="PATRIC" id="fig|360095.6.peg.151"/>
<dbReference type="eggNOG" id="COG0817">
    <property type="taxonomic scope" value="Bacteria"/>
</dbReference>
<dbReference type="HOGENOM" id="CLU_091257_1_0_5"/>
<dbReference type="OrthoDB" id="9805499at2"/>
<dbReference type="Proteomes" id="UP000000643">
    <property type="component" value="Chromosome"/>
</dbReference>
<dbReference type="GO" id="GO:0005737">
    <property type="term" value="C:cytoplasm"/>
    <property type="evidence" value="ECO:0007669"/>
    <property type="project" value="UniProtKB-SubCell"/>
</dbReference>
<dbReference type="GO" id="GO:0048476">
    <property type="term" value="C:Holliday junction resolvase complex"/>
    <property type="evidence" value="ECO:0007669"/>
    <property type="project" value="UniProtKB-UniRule"/>
</dbReference>
<dbReference type="GO" id="GO:0008821">
    <property type="term" value="F:crossover junction DNA endonuclease activity"/>
    <property type="evidence" value="ECO:0007669"/>
    <property type="project" value="UniProtKB-UniRule"/>
</dbReference>
<dbReference type="GO" id="GO:0003677">
    <property type="term" value="F:DNA binding"/>
    <property type="evidence" value="ECO:0007669"/>
    <property type="project" value="UniProtKB-KW"/>
</dbReference>
<dbReference type="GO" id="GO:0000287">
    <property type="term" value="F:magnesium ion binding"/>
    <property type="evidence" value="ECO:0007669"/>
    <property type="project" value="UniProtKB-UniRule"/>
</dbReference>
<dbReference type="GO" id="GO:0006310">
    <property type="term" value="P:DNA recombination"/>
    <property type="evidence" value="ECO:0007669"/>
    <property type="project" value="UniProtKB-UniRule"/>
</dbReference>
<dbReference type="GO" id="GO:0006281">
    <property type="term" value="P:DNA repair"/>
    <property type="evidence" value="ECO:0007669"/>
    <property type="project" value="UniProtKB-UniRule"/>
</dbReference>
<dbReference type="CDD" id="cd16962">
    <property type="entry name" value="RuvC"/>
    <property type="match status" value="1"/>
</dbReference>
<dbReference type="FunFam" id="3.30.420.10:FF:000002">
    <property type="entry name" value="Crossover junction endodeoxyribonuclease RuvC"/>
    <property type="match status" value="1"/>
</dbReference>
<dbReference type="Gene3D" id="3.30.420.10">
    <property type="entry name" value="Ribonuclease H-like superfamily/Ribonuclease H"/>
    <property type="match status" value="1"/>
</dbReference>
<dbReference type="HAMAP" id="MF_00034">
    <property type="entry name" value="RuvC"/>
    <property type="match status" value="1"/>
</dbReference>
<dbReference type="InterPro" id="IPR012337">
    <property type="entry name" value="RNaseH-like_sf"/>
</dbReference>
<dbReference type="InterPro" id="IPR036397">
    <property type="entry name" value="RNaseH_sf"/>
</dbReference>
<dbReference type="InterPro" id="IPR002176">
    <property type="entry name" value="X-over_junc_endoDNase_RuvC"/>
</dbReference>
<dbReference type="NCBIfam" id="TIGR00228">
    <property type="entry name" value="ruvC"/>
    <property type="match status" value="1"/>
</dbReference>
<dbReference type="PANTHER" id="PTHR30194">
    <property type="entry name" value="CROSSOVER JUNCTION ENDODEOXYRIBONUCLEASE RUVC"/>
    <property type="match status" value="1"/>
</dbReference>
<dbReference type="PANTHER" id="PTHR30194:SF3">
    <property type="entry name" value="CROSSOVER JUNCTION ENDODEOXYRIBONUCLEASE RUVC"/>
    <property type="match status" value="1"/>
</dbReference>
<dbReference type="Pfam" id="PF02075">
    <property type="entry name" value="RuvC"/>
    <property type="match status" value="1"/>
</dbReference>
<dbReference type="PRINTS" id="PR00696">
    <property type="entry name" value="RSOLVASERUVC"/>
</dbReference>
<dbReference type="SUPFAM" id="SSF53098">
    <property type="entry name" value="Ribonuclease H-like"/>
    <property type="match status" value="1"/>
</dbReference>
<organism>
    <name type="scientific">Bartonella bacilliformis (strain ATCC 35685 / KC583 / Herrer 020/F12,63)</name>
    <dbReference type="NCBI Taxonomy" id="360095"/>
    <lineage>
        <taxon>Bacteria</taxon>
        <taxon>Pseudomonadati</taxon>
        <taxon>Pseudomonadota</taxon>
        <taxon>Alphaproteobacteria</taxon>
        <taxon>Hyphomicrobiales</taxon>
        <taxon>Bartonellaceae</taxon>
        <taxon>Bartonella</taxon>
    </lineage>
</organism>
<proteinExistence type="inferred from homology"/>
<name>RUVC_BARBK</name>
<evidence type="ECO:0000255" key="1">
    <source>
        <dbReference type="HAMAP-Rule" id="MF_00034"/>
    </source>
</evidence>
<reference key="1">
    <citation type="submission" date="2006-12" db="EMBL/GenBank/DDBJ databases">
        <authorList>
            <person name="Hendrix L."/>
            <person name="Mohamoud Y."/>
            <person name="Radune D."/>
            <person name="Shvartsbeyn A."/>
            <person name="Daugherty S."/>
            <person name="Dodson R."/>
            <person name="Durkin A.S."/>
            <person name="Harkins D."/>
            <person name="Huot H."/>
            <person name="Kothari S.P."/>
            <person name="Madupu R."/>
            <person name="Li J."/>
            <person name="Nelson W.C."/>
            <person name="Shrivastava S."/>
            <person name="Giglio M.G."/>
            <person name="Haft D."/>
            <person name="Selengut J."/>
            <person name="Fraser-Ligget C."/>
            <person name="Seshadri R."/>
        </authorList>
    </citation>
    <scope>NUCLEOTIDE SEQUENCE [LARGE SCALE GENOMIC DNA]</scope>
    <source>
        <strain>ATCC 35685 / KC583 / Herrer 020/F12,63</strain>
    </source>
</reference>
<sequence>MVEKIRIIGIDPGLRRTGWGIIDFLGNHMHFVASGTLHSDAQLNLASRLHQLHKGLSEVVHQFMPHEAAVEHVFVNKDATATLKLGQARAIALLVPAQAGLPVFEYAPNTIKKSVIGVGHGAKEQIHMMVKRLLPRAEFDGHDAADALALVICHSAHRTNFAHRIKG</sequence>